<evidence type="ECO:0000255" key="1">
    <source>
        <dbReference type="HAMAP-Rule" id="MF_01853"/>
    </source>
</evidence>
<name>PELO_METS5</name>
<accession>A4YIP3</accession>
<reference key="1">
    <citation type="journal article" date="2008" name="Appl. Environ. Microbiol.">
        <title>The genome sequence of the metal-mobilizing, extremely thermoacidophilic archaeon Metallosphaera sedula provides insights into bioleaching-associated metabolism.</title>
        <authorList>
            <person name="Auernik K.S."/>
            <person name="Maezato Y."/>
            <person name="Blum P.H."/>
            <person name="Kelly R.M."/>
        </authorList>
    </citation>
    <scope>NUCLEOTIDE SEQUENCE [LARGE SCALE GENOMIC DNA]</scope>
    <source>
        <strain>ATCC 51363 / DSM 5348 / JCM 9185 / NBRC 15509 / TH2</strain>
    </source>
</reference>
<sequence length="341" mass="38575">MKILEYDEKTGALRLHVENEDDLWLIHLVLSKGDIVVARTTRDVSMGNDSRRVPMVVELEVEFSEFQPFTSRLRIHGIVRDAPERYGIKGSHHTINLDIGDEIVIIKKWTKGLIDRIRKQAEKNKRVLIVLTDQDELLVALPMEQGIRILTERSLPGVSDEDKSLESVALEVSKEVEQYVKQYSPDAVIIAGPGPFKEIVRDKLKIKPRIYVDNVSSASRAGLNEILRRDIIDEVMRDYQISVASRELERGLSLLAQGSSLVVYGRDEVERASQIGAVETLLVTDDLLTLEDEETRRKTEAIMEAVESKGGKVMIVPKDSPVYLQLKNLTGLLAILRFRIN</sequence>
<keyword id="KW-0963">Cytoplasm</keyword>
<keyword id="KW-0255">Endonuclease</keyword>
<keyword id="KW-0378">Hydrolase</keyword>
<keyword id="KW-0479">Metal-binding</keyword>
<keyword id="KW-0540">Nuclease</keyword>
<keyword id="KW-1185">Reference proteome</keyword>
<organism>
    <name type="scientific">Metallosphaera sedula (strain ATCC 51363 / DSM 5348 / JCM 9185 / NBRC 15509 / TH2)</name>
    <dbReference type="NCBI Taxonomy" id="399549"/>
    <lineage>
        <taxon>Archaea</taxon>
        <taxon>Thermoproteota</taxon>
        <taxon>Thermoprotei</taxon>
        <taxon>Sulfolobales</taxon>
        <taxon>Sulfolobaceae</taxon>
        <taxon>Metallosphaera</taxon>
    </lineage>
</organism>
<protein>
    <recommendedName>
        <fullName evidence="1">Protein pelota homolog</fullName>
        <ecNumber evidence="1">3.1.-.-</ecNumber>
    </recommendedName>
</protein>
<comment type="function">
    <text evidence="1">May function in recognizing stalled ribosomes, interact with stem-loop structures in stalled mRNA molecules, and effect endonucleolytic cleavage of the mRNA. May play a role in the release non-functional ribosomes and degradation of damaged mRNAs. Has endoribonuclease activity.</text>
</comment>
<comment type="cofactor">
    <cofactor evidence="1">
        <name>a divalent metal cation</name>
        <dbReference type="ChEBI" id="CHEBI:60240"/>
    </cofactor>
</comment>
<comment type="subunit">
    <text evidence="1">Monomer.</text>
</comment>
<comment type="subcellular location">
    <subcellularLocation>
        <location evidence="1">Cytoplasm</location>
    </subcellularLocation>
</comment>
<comment type="domain">
    <text evidence="1">The N-terminal domain has the RNA-binding Sm fold. It harbors the endoribonuclease activity.</text>
</comment>
<comment type="similarity">
    <text evidence="1">Belongs to the eukaryotic release factor 1 family. Pelota subfamily.</text>
</comment>
<gene>
    <name evidence="1" type="primary">pelA</name>
    <name type="ordered locus">Msed_2156</name>
</gene>
<feature type="chain" id="PRO_0000361790" description="Protein pelota homolog">
    <location>
        <begin position="1"/>
        <end position="341"/>
    </location>
</feature>
<dbReference type="EC" id="3.1.-.-" evidence="1"/>
<dbReference type="EMBL" id="CP000682">
    <property type="protein sequence ID" value="ABP96295.1"/>
    <property type="molecule type" value="Genomic_DNA"/>
</dbReference>
<dbReference type="RefSeq" id="WP_012022082.1">
    <property type="nucleotide sequence ID" value="NZ_CP139956.1"/>
</dbReference>
<dbReference type="SMR" id="A4YIP3"/>
<dbReference type="STRING" id="399549.Msed_2156"/>
<dbReference type="KEGG" id="mse:Msed_2156"/>
<dbReference type="eggNOG" id="arCOG01741">
    <property type="taxonomic scope" value="Archaea"/>
</dbReference>
<dbReference type="HOGENOM" id="CLU_023334_0_0_2"/>
<dbReference type="Proteomes" id="UP000000242">
    <property type="component" value="Chromosome"/>
</dbReference>
<dbReference type="GO" id="GO:0005737">
    <property type="term" value="C:cytoplasm"/>
    <property type="evidence" value="ECO:0007669"/>
    <property type="project" value="UniProtKB-SubCell"/>
</dbReference>
<dbReference type="GO" id="GO:0004519">
    <property type="term" value="F:endonuclease activity"/>
    <property type="evidence" value="ECO:0007669"/>
    <property type="project" value="UniProtKB-UniRule"/>
</dbReference>
<dbReference type="GO" id="GO:0046872">
    <property type="term" value="F:metal ion binding"/>
    <property type="evidence" value="ECO:0007669"/>
    <property type="project" value="UniProtKB-UniRule"/>
</dbReference>
<dbReference type="GO" id="GO:0070651">
    <property type="term" value="P:nonfunctional rRNA decay"/>
    <property type="evidence" value="ECO:0007669"/>
    <property type="project" value="TreeGrafter"/>
</dbReference>
<dbReference type="GO" id="GO:0070966">
    <property type="term" value="P:nuclear-transcribed mRNA catabolic process, no-go decay"/>
    <property type="evidence" value="ECO:0007669"/>
    <property type="project" value="InterPro"/>
</dbReference>
<dbReference type="GO" id="GO:0070481">
    <property type="term" value="P:nuclear-transcribed mRNA catabolic process, non-stop decay"/>
    <property type="evidence" value="ECO:0007669"/>
    <property type="project" value="InterPro"/>
</dbReference>
<dbReference type="GO" id="GO:0032790">
    <property type="term" value="P:ribosome disassembly"/>
    <property type="evidence" value="ECO:0007669"/>
    <property type="project" value="TreeGrafter"/>
</dbReference>
<dbReference type="GO" id="GO:0071025">
    <property type="term" value="P:RNA surveillance"/>
    <property type="evidence" value="ECO:0007669"/>
    <property type="project" value="InterPro"/>
</dbReference>
<dbReference type="Gene3D" id="3.30.1330.30">
    <property type="match status" value="1"/>
</dbReference>
<dbReference type="Gene3D" id="3.30.420.60">
    <property type="entry name" value="eRF1 domain 2"/>
    <property type="match status" value="1"/>
</dbReference>
<dbReference type="Gene3D" id="2.30.30.870">
    <property type="entry name" value="Pelota, domain A"/>
    <property type="match status" value="1"/>
</dbReference>
<dbReference type="HAMAP" id="MF_01853">
    <property type="entry name" value="PelO"/>
    <property type="match status" value="1"/>
</dbReference>
<dbReference type="InterPro" id="IPR042226">
    <property type="entry name" value="eFR1_2_sf"/>
</dbReference>
<dbReference type="InterPro" id="IPR005140">
    <property type="entry name" value="eRF1_1_Pelota"/>
</dbReference>
<dbReference type="InterPro" id="IPR005142">
    <property type="entry name" value="eRF1_3"/>
</dbReference>
<dbReference type="InterPro" id="IPR038069">
    <property type="entry name" value="Pelota/DOM34_N"/>
</dbReference>
<dbReference type="InterPro" id="IPR023521">
    <property type="entry name" value="Pelota_arc"/>
</dbReference>
<dbReference type="InterPro" id="IPR029064">
    <property type="entry name" value="Ribosomal_eL30-like_sf"/>
</dbReference>
<dbReference type="InterPro" id="IPR004405">
    <property type="entry name" value="Transl-rel_pelota"/>
</dbReference>
<dbReference type="NCBIfam" id="TIGR00111">
    <property type="entry name" value="pelota"/>
    <property type="match status" value="1"/>
</dbReference>
<dbReference type="PANTHER" id="PTHR10853">
    <property type="entry name" value="PELOTA"/>
    <property type="match status" value="1"/>
</dbReference>
<dbReference type="PANTHER" id="PTHR10853:SF0">
    <property type="entry name" value="PROTEIN PELOTA HOMOLOG"/>
    <property type="match status" value="1"/>
</dbReference>
<dbReference type="Pfam" id="PF03463">
    <property type="entry name" value="eRF1_1"/>
    <property type="match status" value="1"/>
</dbReference>
<dbReference type="Pfam" id="PF03465">
    <property type="entry name" value="eRF1_3"/>
    <property type="match status" value="1"/>
</dbReference>
<dbReference type="SMART" id="SM01194">
    <property type="entry name" value="eRF1_1"/>
    <property type="match status" value="1"/>
</dbReference>
<dbReference type="SUPFAM" id="SSF159065">
    <property type="entry name" value="Dom34/Pelota N-terminal domain-like"/>
    <property type="match status" value="1"/>
</dbReference>
<dbReference type="SUPFAM" id="SSF55315">
    <property type="entry name" value="L30e-like"/>
    <property type="match status" value="1"/>
</dbReference>
<dbReference type="SUPFAM" id="SSF53137">
    <property type="entry name" value="Translational machinery components"/>
    <property type="match status" value="1"/>
</dbReference>
<proteinExistence type="inferred from homology"/>